<organism>
    <name type="scientific">Conus magus</name>
    <name type="common">Magical cone</name>
    <dbReference type="NCBI Taxonomy" id="6492"/>
    <lineage>
        <taxon>Eukaryota</taxon>
        <taxon>Metazoa</taxon>
        <taxon>Spiralia</taxon>
        <taxon>Lophotrochozoa</taxon>
        <taxon>Mollusca</taxon>
        <taxon>Gastropoda</taxon>
        <taxon>Caenogastropoda</taxon>
        <taxon>Neogastropoda</taxon>
        <taxon>Conoidea</taxon>
        <taxon>Conidae</taxon>
        <taxon>Conus</taxon>
        <taxon>Pionoconus</taxon>
    </lineage>
</organism>
<proteinExistence type="evidence at transcript level"/>
<name>I1B1_CONMA</name>
<evidence type="ECO:0000250" key="1"/>
<evidence type="ECO:0000250" key="2">
    <source>
        <dbReference type="UniProtKB" id="Q7Z094"/>
    </source>
</evidence>
<evidence type="ECO:0000305" key="3"/>
<comment type="function">
    <text evidence="1">Iota-conotoxins bind to voltage-gated sodium channels (Nav) and act as agonists by shifting the voltage-dependence of activation to more hyperpolarized levels. Produces general excitatory symptoms (By similarity).</text>
</comment>
<comment type="subcellular location">
    <subcellularLocation>
        <location evidence="1">Secreted</location>
    </subcellularLocation>
</comment>
<comment type="tissue specificity">
    <text>Expressed by the venom duct.</text>
</comment>
<comment type="domain">
    <text>The cysteine framework is XI (C-C-CC-CC-C-C).</text>
</comment>
<comment type="similarity">
    <text evidence="3">Belongs to the conotoxin I1 superfamily.</text>
</comment>
<protein>
    <recommendedName>
        <fullName>Iota-conotoxin-like M11.1</fullName>
    </recommendedName>
</protein>
<dbReference type="ConoServer" id="1420">
    <property type="toxin name" value="M11.1a"/>
</dbReference>
<dbReference type="GO" id="GO:0005576">
    <property type="term" value="C:extracellular region"/>
    <property type="evidence" value="ECO:0007669"/>
    <property type="project" value="UniProtKB-SubCell"/>
</dbReference>
<dbReference type="GO" id="GO:0017080">
    <property type="term" value="F:sodium channel regulator activity"/>
    <property type="evidence" value="ECO:0007669"/>
    <property type="project" value="UniProtKB-KW"/>
</dbReference>
<dbReference type="GO" id="GO:0090729">
    <property type="term" value="F:toxin activity"/>
    <property type="evidence" value="ECO:0007669"/>
    <property type="project" value="UniProtKB-KW"/>
</dbReference>
<dbReference type="Gene3D" id="4.10.40.80">
    <property type="match status" value="1"/>
</dbReference>
<dbReference type="InterPro" id="IPR013141">
    <property type="entry name" value="Conotoxin-I_CS"/>
</dbReference>
<dbReference type="InterPro" id="IPR012624">
    <property type="entry name" value="Toxin_19"/>
</dbReference>
<dbReference type="Pfam" id="PF08088">
    <property type="entry name" value="Toxin_19"/>
    <property type="match status" value="1"/>
</dbReference>
<dbReference type="PROSITE" id="PS60019">
    <property type="entry name" value="I_CONOTOXIN"/>
    <property type="match status" value="1"/>
</dbReference>
<reference key="1">
    <citation type="journal article" date="2005" name="FEBS J.">
        <title>Characterization of D-amino-acid-containing excitatory conotoxins and redefinition of the I-conotoxin superfamily.</title>
        <authorList>
            <person name="Buczek O."/>
            <person name="Yoshikami D."/>
            <person name="Watkins M."/>
            <person name="Bulaj G."/>
            <person name="Jimenez E.C."/>
            <person name="Olivera B.M."/>
        </authorList>
    </citation>
    <scope>NUCLEOTIDE SEQUENCE [MRNA]</scope>
    <source>
        <tissue>Venom duct</tissue>
    </source>
</reference>
<reference key="2">
    <citation type="journal article" date="2005" name="FEBS J.">
        <authorList>
            <person name="Buczek O."/>
            <person name="Yoshikami D."/>
            <person name="Watkins M."/>
            <person name="Bulaj G."/>
            <person name="Jimenez E.C."/>
            <person name="Olivera B.M."/>
        </authorList>
    </citation>
    <scope>ERRATUM OF PUBMED:16098199</scope>
</reference>
<sequence length="46" mass="4832">GAVPCGKDGRQCRNHADCCNCCPIGTCAPSTNWILPGCSTGQFMTR</sequence>
<keyword id="KW-0208">D-amino acid</keyword>
<keyword id="KW-1015">Disulfide bond</keyword>
<keyword id="KW-0872">Ion channel impairing toxin</keyword>
<keyword id="KW-0528">Neurotoxin</keyword>
<keyword id="KW-0964">Secreted</keyword>
<keyword id="KW-0800">Toxin</keyword>
<keyword id="KW-0738">Voltage-gated sodium channel impairing toxin</keyword>
<feature type="chain" id="PRO_0000262685" description="Iota-conotoxin-like M11.1">
    <location>
        <begin position="1" status="less than"/>
        <end position="45"/>
    </location>
</feature>
<feature type="propeptide" id="PRO_0000262686" description="Removed by a carboxypeptidase" evidence="1">
    <location>
        <position position="46"/>
    </location>
</feature>
<feature type="modified residue" description="D-methionine" evidence="1">
    <location>
        <position position="44"/>
    </location>
</feature>
<feature type="disulfide bond" evidence="2">
    <location>
        <begin position="5"/>
        <end position="19"/>
    </location>
</feature>
<feature type="disulfide bond" evidence="2">
    <location>
        <begin position="12"/>
        <end position="22"/>
    </location>
</feature>
<feature type="disulfide bond" evidence="2">
    <location>
        <begin position="18"/>
        <end position="27"/>
    </location>
</feature>
<feature type="disulfide bond" evidence="2">
    <location>
        <begin position="21"/>
        <end position="38"/>
    </location>
</feature>
<feature type="non-terminal residue">
    <location>
        <position position="1"/>
    </location>
</feature>
<accession>P0C257</accession>